<keyword id="KW-0067">ATP-binding</keyword>
<keyword id="KW-0315">Glutamine amidotransferase</keyword>
<keyword id="KW-0436">Ligase</keyword>
<keyword id="KW-0460">Magnesium</keyword>
<keyword id="KW-0479">Metal-binding</keyword>
<keyword id="KW-0547">Nucleotide-binding</keyword>
<keyword id="KW-0665">Pyrimidine biosynthesis</keyword>
<keyword id="KW-1185">Reference proteome</keyword>
<proteinExistence type="inferred from homology"/>
<feature type="chain" id="PRO_1000139465" description="CTP synthase">
    <location>
        <begin position="1"/>
        <end position="543"/>
    </location>
</feature>
<feature type="domain" description="Glutamine amidotransferase type-1" evidence="1">
    <location>
        <begin position="291"/>
        <end position="542"/>
    </location>
</feature>
<feature type="region of interest" description="Amidoligase domain" evidence="1">
    <location>
        <begin position="1"/>
        <end position="265"/>
    </location>
</feature>
<feature type="active site" description="Nucleophile; for glutamine hydrolysis" evidence="1">
    <location>
        <position position="381"/>
    </location>
</feature>
<feature type="active site" evidence="1">
    <location>
        <position position="515"/>
    </location>
</feature>
<feature type="active site" evidence="1">
    <location>
        <position position="517"/>
    </location>
</feature>
<feature type="binding site" evidence="1">
    <location>
        <position position="13"/>
    </location>
    <ligand>
        <name>CTP</name>
        <dbReference type="ChEBI" id="CHEBI:37563"/>
        <note>allosteric inhibitor</note>
    </ligand>
</feature>
<feature type="binding site" evidence="1">
    <location>
        <position position="13"/>
    </location>
    <ligand>
        <name>UTP</name>
        <dbReference type="ChEBI" id="CHEBI:46398"/>
    </ligand>
</feature>
<feature type="binding site" evidence="1">
    <location>
        <begin position="14"/>
        <end position="19"/>
    </location>
    <ligand>
        <name>ATP</name>
        <dbReference type="ChEBI" id="CHEBI:30616"/>
    </ligand>
</feature>
<feature type="binding site" evidence="1">
    <location>
        <position position="54"/>
    </location>
    <ligand>
        <name>L-glutamine</name>
        <dbReference type="ChEBI" id="CHEBI:58359"/>
    </ligand>
</feature>
<feature type="binding site" evidence="1">
    <location>
        <position position="71"/>
    </location>
    <ligand>
        <name>ATP</name>
        <dbReference type="ChEBI" id="CHEBI:30616"/>
    </ligand>
</feature>
<feature type="binding site" evidence="1">
    <location>
        <position position="71"/>
    </location>
    <ligand>
        <name>Mg(2+)</name>
        <dbReference type="ChEBI" id="CHEBI:18420"/>
    </ligand>
</feature>
<feature type="binding site" evidence="1">
    <location>
        <position position="139"/>
    </location>
    <ligand>
        <name>Mg(2+)</name>
        <dbReference type="ChEBI" id="CHEBI:18420"/>
    </ligand>
</feature>
<feature type="binding site" evidence="1">
    <location>
        <begin position="146"/>
        <end position="148"/>
    </location>
    <ligand>
        <name>CTP</name>
        <dbReference type="ChEBI" id="CHEBI:37563"/>
        <note>allosteric inhibitor</note>
    </ligand>
</feature>
<feature type="binding site" evidence="1">
    <location>
        <begin position="186"/>
        <end position="191"/>
    </location>
    <ligand>
        <name>CTP</name>
        <dbReference type="ChEBI" id="CHEBI:37563"/>
        <note>allosteric inhibitor</note>
    </ligand>
</feature>
<feature type="binding site" evidence="1">
    <location>
        <begin position="186"/>
        <end position="191"/>
    </location>
    <ligand>
        <name>UTP</name>
        <dbReference type="ChEBI" id="CHEBI:46398"/>
    </ligand>
</feature>
<feature type="binding site" evidence="1">
    <location>
        <position position="222"/>
    </location>
    <ligand>
        <name>CTP</name>
        <dbReference type="ChEBI" id="CHEBI:37563"/>
        <note>allosteric inhibitor</note>
    </ligand>
</feature>
<feature type="binding site" evidence="1">
    <location>
        <position position="222"/>
    </location>
    <ligand>
        <name>UTP</name>
        <dbReference type="ChEBI" id="CHEBI:46398"/>
    </ligand>
</feature>
<feature type="binding site" evidence="1">
    <location>
        <position position="354"/>
    </location>
    <ligand>
        <name>L-glutamine</name>
        <dbReference type="ChEBI" id="CHEBI:58359"/>
    </ligand>
</feature>
<feature type="binding site" evidence="1">
    <location>
        <begin position="382"/>
        <end position="385"/>
    </location>
    <ligand>
        <name>L-glutamine</name>
        <dbReference type="ChEBI" id="CHEBI:58359"/>
    </ligand>
</feature>
<feature type="binding site" evidence="1">
    <location>
        <position position="405"/>
    </location>
    <ligand>
        <name>L-glutamine</name>
        <dbReference type="ChEBI" id="CHEBI:58359"/>
    </ligand>
</feature>
<feature type="binding site" evidence="1">
    <location>
        <position position="470"/>
    </location>
    <ligand>
        <name>L-glutamine</name>
        <dbReference type="ChEBI" id="CHEBI:58359"/>
    </ligand>
</feature>
<name>PYRG_GLUDA</name>
<dbReference type="EC" id="6.3.4.2" evidence="1"/>
<dbReference type="EMBL" id="CP001189">
    <property type="protein sequence ID" value="ACI49952.1"/>
    <property type="molecule type" value="Genomic_DNA"/>
</dbReference>
<dbReference type="EMBL" id="AM889285">
    <property type="protein sequence ID" value="CAP55873.1"/>
    <property type="molecule type" value="Genomic_DNA"/>
</dbReference>
<dbReference type="RefSeq" id="WP_012225562.1">
    <property type="nucleotide sequence ID" value="NC_010125.1"/>
</dbReference>
<dbReference type="SMR" id="A9HJ81"/>
<dbReference type="STRING" id="272568.GDI1930"/>
<dbReference type="MEROPS" id="C26.964"/>
<dbReference type="KEGG" id="gdi:GDI1930"/>
<dbReference type="KEGG" id="gdj:Gdia_0152"/>
<dbReference type="eggNOG" id="COG0504">
    <property type="taxonomic scope" value="Bacteria"/>
</dbReference>
<dbReference type="HOGENOM" id="CLU_011675_5_0_5"/>
<dbReference type="OrthoDB" id="9801107at2"/>
<dbReference type="UniPathway" id="UPA00159">
    <property type="reaction ID" value="UER00277"/>
</dbReference>
<dbReference type="Proteomes" id="UP000001176">
    <property type="component" value="Chromosome"/>
</dbReference>
<dbReference type="GO" id="GO:0005829">
    <property type="term" value="C:cytosol"/>
    <property type="evidence" value="ECO:0007669"/>
    <property type="project" value="TreeGrafter"/>
</dbReference>
<dbReference type="GO" id="GO:0005524">
    <property type="term" value="F:ATP binding"/>
    <property type="evidence" value="ECO:0007669"/>
    <property type="project" value="UniProtKB-KW"/>
</dbReference>
<dbReference type="GO" id="GO:0003883">
    <property type="term" value="F:CTP synthase activity"/>
    <property type="evidence" value="ECO:0007669"/>
    <property type="project" value="UniProtKB-UniRule"/>
</dbReference>
<dbReference type="GO" id="GO:0004359">
    <property type="term" value="F:glutaminase activity"/>
    <property type="evidence" value="ECO:0007669"/>
    <property type="project" value="RHEA"/>
</dbReference>
<dbReference type="GO" id="GO:0042802">
    <property type="term" value="F:identical protein binding"/>
    <property type="evidence" value="ECO:0007669"/>
    <property type="project" value="TreeGrafter"/>
</dbReference>
<dbReference type="GO" id="GO:0046872">
    <property type="term" value="F:metal ion binding"/>
    <property type="evidence" value="ECO:0007669"/>
    <property type="project" value="UniProtKB-KW"/>
</dbReference>
<dbReference type="GO" id="GO:0044210">
    <property type="term" value="P:'de novo' CTP biosynthetic process"/>
    <property type="evidence" value="ECO:0007669"/>
    <property type="project" value="UniProtKB-UniRule"/>
</dbReference>
<dbReference type="GO" id="GO:0019856">
    <property type="term" value="P:pyrimidine nucleobase biosynthetic process"/>
    <property type="evidence" value="ECO:0007669"/>
    <property type="project" value="TreeGrafter"/>
</dbReference>
<dbReference type="CDD" id="cd03113">
    <property type="entry name" value="CTPS_N"/>
    <property type="match status" value="1"/>
</dbReference>
<dbReference type="CDD" id="cd01746">
    <property type="entry name" value="GATase1_CTP_Synthase"/>
    <property type="match status" value="1"/>
</dbReference>
<dbReference type="FunFam" id="3.40.50.300:FF:000009">
    <property type="entry name" value="CTP synthase"/>
    <property type="match status" value="1"/>
</dbReference>
<dbReference type="FunFam" id="3.40.50.880:FF:000002">
    <property type="entry name" value="CTP synthase"/>
    <property type="match status" value="1"/>
</dbReference>
<dbReference type="Gene3D" id="3.40.50.880">
    <property type="match status" value="1"/>
</dbReference>
<dbReference type="Gene3D" id="3.40.50.300">
    <property type="entry name" value="P-loop containing nucleotide triphosphate hydrolases"/>
    <property type="match status" value="1"/>
</dbReference>
<dbReference type="HAMAP" id="MF_01227">
    <property type="entry name" value="PyrG"/>
    <property type="match status" value="1"/>
</dbReference>
<dbReference type="InterPro" id="IPR029062">
    <property type="entry name" value="Class_I_gatase-like"/>
</dbReference>
<dbReference type="InterPro" id="IPR004468">
    <property type="entry name" value="CTP_synthase"/>
</dbReference>
<dbReference type="InterPro" id="IPR017456">
    <property type="entry name" value="CTP_synthase_N"/>
</dbReference>
<dbReference type="InterPro" id="IPR017926">
    <property type="entry name" value="GATASE"/>
</dbReference>
<dbReference type="InterPro" id="IPR033828">
    <property type="entry name" value="GATase1_CTP_Synthase"/>
</dbReference>
<dbReference type="InterPro" id="IPR027417">
    <property type="entry name" value="P-loop_NTPase"/>
</dbReference>
<dbReference type="NCBIfam" id="NF003792">
    <property type="entry name" value="PRK05380.1"/>
    <property type="match status" value="1"/>
</dbReference>
<dbReference type="NCBIfam" id="TIGR00337">
    <property type="entry name" value="PyrG"/>
    <property type="match status" value="1"/>
</dbReference>
<dbReference type="PANTHER" id="PTHR11550">
    <property type="entry name" value="CTP SYNTHASE"/>
    <property type="match status" value="1"/>
</dbReference>
<dbReference type="PANTHER" id="PTHR11550:SF0">
    <property type="entry name" value="CTP SYNTHASE-RELATED"/>
    <property type="match status" value="1"/>
</dbReference>
<dbReference type="Pfam" id="PF06418">
    <property type="entry name" value="CTP_synth_N"/>
    <property type="match status" value="1"/>
</dbReference>
<dbReference type="Pfam" id="PF00117">
    <property type="entry name" value="GATase"/>
    <property type="match status" value="1"/>
</dbReference>
<dbReference type="SUPFAM" id="SSF52317">
    <property type="entry name" value="Class I glutamine amidotransferase-like"/>
    <property type="match status" value="1"/>
</dbReference>
<dbReference type="SUPFAM" id="SSF52540">
    <property type="entry name" value="P-loop containing nucleoside triphosphate hydrolases"/>
    <property type="match status" value="1"/>
</dbReference>
<dbReference type="PROSITE" id="PS51273">
    <property type="entry name" value="GATASE_TYPE_1"/>
    <property type="match status" value="1"/>
</dbReference>
<organism>
    <name type="scientific">Gluconacetobacter diazotrophicus (strain ATCC 49037 / DSM 5601 / CCUG 37298 / CIP 103539 / LMG 7603 / PAl5)</name>
    <dbReference type="NCBI Taxonomy" id="272568"/>
    <lineage>
        <taxon>Bacteria</taxon>
        <taxon>Pseudomonadati</taxon>
        <taxon>Pseudomonadota</taxon>
        <taxon>Alphaproteobacteria</taxon>
        <taxon>Acetobacterales</taxon>
        <taxon>Acetobacteraceae</taxon>
        <taxon>Gluconacetobacter</taxon>
    </lineage>
</organism>
<sequence>MTRFVFITGGVVSSLGKGIASAALAALLQARGYRVRLRKLDPYLNVDPGTMSPYQHGEVFVTDDGAETDLDLGHYERFTGVHATRADNATTGQIYSDVIARERRGDYLGATVQVIPHITDAIKEAVVAGTEDLDFVLVEIGGTVGDIESLPFLEAIRQLRNDLGAGQTMFVHLTLLPWIPSAGELKTKPTQHSVKELQNVGIQAQMLLCRSDRPIPDTERRKIANFCNVRPEAVIAALDVDTIYACPVSYHAEGMDTEVLRHFGLPHDQEPDLSAWNRVLDAMRHPEGEVRIAVVGKYTALLDAYKSLIEALQHGGIANRVRVKLDWVEAEIFEKSETAIEALRDAHAILVPGGFGERGSEGKIQAVRFAREHNIPFLGICFGMQMAVIECARNLAGLPDASSTEFGPTEEPLVGLMTEWARGNELLRRREGGEMGGTMRLGAYAAKLAEGSRVAEIYGKTEIRERHRHRYEVNVHYREVLEKAGLQFSGMSPDDILPEVVEYPNHPWFVAVQYHPELLSKPFDPHPLFSGFVGAAVKKMRLV</sequence>
<accession>A9HJ81</accession>
<evidence type="ECO:0000255" key="1">
    <source>
        <dbReference type="HAMAP-Rule" id="MF_01227"/>
    </source>
</evidence>
<gene>
    <name evidence="1" type="primary">pyrG</name>
    <name type="ordered locus">GDI1930</name>
    <name type="ordered locus">Gdia_0152</name>
</gene>
<comment type="function">
    <text evidence="1">Catalyzes the ATP-dependent amination of UTP to CTP with either L-glutamine or ammonia as the source of nitrogen. Regulates intracellular CTP levels through interactions with the four ribonucleotide triphosphates.</text>
</comment>
<comment type="catalytic activity">
    <reaction evidence="1">
        <text>UTP + L-glutamine + ATP + H2O = CTP + L-glutamate + ADP + phosphate + 2 H(+)</text>
        <dbReference type="Rhea" id="RHEA:26426"/>
        <dbReference type="ChEBI" id="CHEBI:15377"/>
        <dbReference type="ChEBI" id="CHEBI:15378"/>
        <dbReference type="ChEBI" id="CHEBI:29985"/>
        <dbReference type="ChEBI" id="CHEBI:30616"/>
        <dbReference type="ChEBI" id="CHEBI:37563"/>
        <dbReference type="ChEBI" id="CHEBI:43474"/>
        <dbReference type="ChEBI" id="CHEBI:46398"/>
        <dbReference type="ChEBI" id="CHEBI:58359"/>
        <dbReference type="ChEBI" id="CHEBI:456216"/>
        <dbReference type="EC" id="6.3.4.2"/>
    </reaction>
</comment>
<comment type="catalytic activity">
    <reaction evidence="1">
        <text>L-glutamine + H2O = L-glutamate + NH4(+)</text>
        <dbReference type="Rhea" id="RHEA:15889"/>
        <dbReference type="ChEBI" id="CHEBI:15377"/>
        <dbReference type="ChEBI" id="CHEBI:28938"/>
        <dbReference type="ChEBI" id="CHEBI:29985"/>
        <dbReference type="ChEBI" id="CHEBI:58359"/>
    </reaction>
</comment>
<comment type="catalytic activity">
    <reaction evidence="1">
        <text>UTP + NH4(+) + ATP = CTP + ADP + phosphate + 2 H(+)</text>
        <dbReference type="Rhea" id="RHEA:16597"/>
        <dbReference type="ChEBI" id="CHEBI:15378"/>
        <dbReference type="ChEBI" id="CHEBI:28938"/>
        <dbReference type="ChEBI" id="CHEBI:30616"/>
        <dbReference type="ChEBI" id="CHEBI:37563"/>
        <dbReference type="ChEBI" id="CHEBI:43474"/>
        <dbReference type="ChEBI" id="CHEBI:46398"/>
        <dbReference type="ChEBI" id="CHEBI:456216"/>
    </reaction>
</comment>
<comment type="activity regulation">
    <text evidence="1">Allosterically activated by GTP, when glutamine is the substrate; GTP has no effect on the reaction when ammonia is the substrate. The allosteric effector GTP functions by stabilizing the protein conformation that binds the tetrahedral intermediate(s) formed during glutamine hydrolysis. Inhibited by the product CTP, via allosteric rather than competitive inhibition.</text>
</comment>
<comment type="pathway">
    <text evidence="1">Pyrimidine metabolism; CTP biosynthesis via de novo pathway; CTP from UDP: step 2/2.</text>
</comment>
<comment type="subunit">
    <text evidence="1">Homotetramer.</text>
</comment>
<comment type="miscellaneous">
    <text evidence="1">CTPSs have evolved a hybrid strategy for distinguishing between UTP and CTP. The overlapping regions of the product feedback inhibitory and substrate sites recognize a common feature in both compounds, the triphosphate moiety. To differentiate isosteric substrate and product pyrimidine rings, an additional pocket far from the expected kinase/ligase catalytic site, specifically recognizes the cytosine and ribose portions of the product inhibitor.</text>
</comment>
<comment type="similarity">
    <text evidence="1">Belongs to the CTP synthase family.</text>
</comment>
<protein>
    <recommendedName>
        <fullName evidence="1">CTP synthase</fullName>
        <ecNumber evidence="1">6.3.4.2</ecNumber>
    </recommendedName>
    <alternativeName>
        <fullName evidence="1">Cytidine 5'-triphosphate synthase</fullName>
    </alternativeName>
    <alternativeName>
        <fullName evidence="1">Cytidine triphosphate synthetase</fullName>
        <shortName evidence="1">CTP synthetase</shortName>
        <shortName evidence="1">CTPS</shortName>
    </alternativeName>
    <alternativeName>
        <fullName evidence="1">UTP--ammonia ligase</fullName>
    </alternativeName>
</protein>
<reference key="1">
    <citation type="journal article" date="2009" name="BMC Genomics">
        <title>Complete genome sequence of the sugarcane nitrogen-fixing endophyte Gluconacetobacter diazotrophicus Pal5.</title>
        <authorList>
            <person name="Bertalan M."/>
            <person name="Albano R."/>
            <person name="de Padua V."/>
            <person name="Rouws L."/>
            <person name="Rojas C."/>
            <person name="Hemerly A."/>
            <person name="Teixeira K."/>
            <person name="Schwab S."/>
            <person name="Araujo J."/>
            <person name="Oliveira A."/>
            <person name="Franca L."/>
            <person name="Magalhaes V."/>
            <person name="Alqueres S."/>
            <person name="Cardoso A."/>
            <person name="Almeida W."/>
            <person name="Loureiro M.M."/>
            <person name="Nogueira E."/>
            <person name="Cidade D."/>
            <person name="Oliveira D."/>
            <person name="Simao T."/>
            <person name="Macedo J."/>
            <person name="Valadao A."/>
            <person name="Dreschsel M."/>
            <person name="Freitas F."/>
            <person name="Vidal M."/>
            <person name="Guedes H."/>
            <person name="Rodrigues E."/>
            <person name="Meneses C."/>
            <person name="Brioso P."/>
            <person name="Pozzer L."/>
            <person name="Figueiredo D."/>
            <person name="Montano H."/>
            <person name="Junior J."/>
            <person name="de Souza Filho G."/>
            <person name="Martin Quintana Flores V."/>
            <person name="Ferreira B."/>
            <person name="Branco A."/>
            <person name="Gonzalez P."/>
            <person name="Guillobel H."/>
            <person name="Lemos M."/>
            <person name="Seibel L."/>
            <person name="Macedo J."/>
            <person name="Alves-Ferreira M."/>
            <person name="Sachetto-Martins G."/>
            <person name="Coelho A."/>
            <person name="Santos E."/>
            <person name="Amaral G."/>
            <person name="Neves A."/>
            <person name="Pacheco A.B."/>
            <person name="Carvalho D."/>
            <person name="Lery L."/>
            <person name="Bisch P."/>
            <person name="Rossle S.C."/>
            <person name="Urmenyi T."/>
            <person name="Rael Pereira A."/>
            <person name="Silva R."/>
            <person name="Rondinelli E."/>
            <person name="von Kruger W."/>
            <person name="Martins O."/>
            <person name="Baldani J.I."/>
            <person name="Ferreira P.C."/>
        </authorList>
    </citation>
    <scope>NUCLEOTIDE SEQUENCE [LARGE SCALE GENOMIC DNA]</scope>
    <source>
        <strain>ATCC 49037 / DSM 5601 / CCUG 37298 / CIP 103539 / LMG 7603 / PAl5</strain>
    </source>
</reference>
<reference key="2">
    <citation type="journal article" date="2010" name="Stand. Genomic Sci.">
        <title>Two genome sequences of the same bacterial strain, Gluconacetobacter diazotrophicus PAl 5, suggest a new standard in genome sequence submission.</title>
        <authorList>
            <person name="Giongo A."/>
            <person name="Tyler H.L."/>
            <person name="Zipperer U.N."/>
            <person name="Triplett E.W."/>
        </authorList>
    </citation>
    <scope>NUCLEOTIDE SEQUENCE [LARGE SCALE GENOMIC DNA]</scope>
    <source>
        <strain>ATCC 49037 / DSM 5601 / CCUG 37298 / CIP 103539 / LMG 7603 / PAl5</strain>
    </source>
</reference>